<organism>
    <name type="scientific">Pongo abelii</name>
    <name type="common">Sumatran orangutan</name>
    <name type="synonym">Pongo pygmaeus abelii</name>
    <dbReference type="NCBI Taxonomy" id="9601"/>
    <lineage>
        <taxon>Eukaryota</taxon>
        <taxon>Metazoa</taxon>
        <taxon>Chordata</taxon>
        <taxon>Craniata</taxon>
        <taxon>Vertebrata</taxon>
        <taxon>Euteleostomi</taxon>
        <taxon>Mammalia</taxon>
        <taxon>Eutheria</taxon>
        <taxon>Euarchontoglires</taxon>
        <taxon>Primates</taxon>
        <taxon>Haplorrhini</taxon>
        <taxon>Catarrhini</taxon>
        <taxon>Hominidae</taxon>
        <taxon>Pongo</taxon>
    </lineage>
</organism>
<evidence type="ECO:0000250" key="1"/>
<evidence type="ECO:0000250" key="2">
    <source>
        <dbReference type="UniProtKB" id="Q13630"/>
    </source>
</evidence>
<evidence type="ECO:0000305" key="3"/>
<feature type="chain" id="PRO_0000174352" description="GDP-L-fucose synthase">
    <location>
        <begin position="1"/>
        <end position="321"/>
    </location>
</feature>
<feature type="active site" description="Proton donor/acceptor" evidence="1">
    <location>
        <position position="143"/>
    </location>
</feature>
<feature type="binding site" evidence="2">
    <location>
        <begin position="14"/>
        <end position="20"/>
    </location>
    <ligand>
        <name>NADP(+)</name>
        <dbReference type="ChEBI" id="CHEBI:58349"/>
    </ligand>
</feature>
<feature type="binding site" evidence="2">
    <location>
        <position position="147"/>
    </location>
    <ligand>
        <name>NADP(+)</name>
        <dbReference type="ChEBI" id="CHEBI:58349"/>
    </ligand>
</feature>
<feature type="binding site" evidence="2">
    <location>
        <begin position="170"/>
        <end position="173"/>
    </location>
    <ligand>
        <name>NADP(+)</name>
        <dbReference type="ChEBI" id="CHEBI:58349"/>
    </ligand>
</feature>
<feature type="binding site" evidence="2">
    <location>
        <position position="186"/>
    </location>
    <ligand>
        <name>NADP(+)</name>
        <dbReference type="ChEBI" id="CHEBI:58349"/>
    </ligand>
</feature>
<feature type="binding site" evidence="2">
    <location>
        <position position="194"/>
    </location>
    <ligand>
        <name>substrate</name>
    </ligand>
</feature>
<feature type="binding site" evidence="2">
    <location>
        <position position="208"/>
    </location>
    <ligand>
        <name>substrate</name>
    </ligand>
</feature>
<feature type="binding site" evidence="2">
    <location>
        <position position="215"/>
    </location>
    <ligand>
        <name>substrate</name>
    </ligand>
</feature>
<feature type="binding site" evidence="2">
    <location>
        <position position="277"/>
    </location>
    <ligand>
        <name>substrate</name>
    </ligand>
</feature>
<feature type="site" description="Important for catalytic activity" evidence="1">
    <location>
        <position position="114"/>
    </location>
</feature>
<feature type="site" description="Important for catalytic activity" evidence="1">
    <location>
        <position position="116"/>
    </location>
</feature>
<feature type="site" description="Lowers pKa of active site Tyr" evidence="1">
    <location>
        <position position="147"/>
    </location>
</feature>
<gene>
    <name type="primary">GFUS</name>
    <name type="synonym">TSTA3</name>
</gene>
<sequence>MGEPQGSMRILVTGGSGLVGKAIQKVVADGAGLPGEDWVFVSSKDADLTDAAQTRALLEKVRPTHVIHLAAMVGGLFRNIKYNLDFWRKNVHINDNVLHSAFEVGARKVVSCLSTCIFPDKTTYPIDETMIHNGPPHSSNFGYSYVKRMIDVQNRAYFQQYGCTFTAVIPTNVFGPHDNFNIEDGHVLPGLIHKVHLAKSSGSALTVWGTGKPRRQFIYSLDLAQLFIWVLREYNEVEPIILSVGEDDEVSIKEAAEAVVEAMDFHGEVTFDTTKSDGQFKKTASNSKLRTYLPDFRFTPFKQAVKETCAWFTDNYEQARK</sequence>
<keyword id="KW-0413">Isomerase</keyword>
<keyword id="KW-0511">Multifunctional enzyme</keyword>
<keyword id="KW-0521">NADP</keyword>
<keyword id="KW-0560">Oxidoreductase</keyword>
<keyword id="KW-1185">Reference proteome</keyword>
<name>FCL_PONAB</name>
<protein>
    <recommendedName>
        <fullName evidence="3">GDP-L-fucose synthase</fullName>
        <ecNumber evidence="2">1.1.1.271</ecNumber>
    </recommendedName>
    <alternativeName>
        <fullName>GDP-4-keto-6-deoxy-D-mannose-3,5-epimerase-4-reductase</fullName>
    </alternativeName>
    <alternativeName>
        <fullName>Protein FX</fullName>
    </alternativeName>
    <alternativeName>
        <fullName>Red cell NADP(H)-binding protein</fullName>
    </alternativeName>
</protein>
<comment type="function">
    <text evidence="2">Catalyzes the two-step NADP-dependent conversion of GDP-4-dehydro-6-deoxy-D-mannose to GDP-fucose, involving an epimerase and a reductase reaction.</text>
</comment>
<comment type="catalytic activity">
    <reaction evidence="2">
        <text>GDP-beta-L-fucose + NADP(+) = GDP-4-dehydro-alpha-D-rhamnose + NADPH + H(+)</text>
        <dbReference type="Rhea" id="RHEA:18885"/>
        <dbReference type="ChEBI" id="CHEBI:15378"/>
        <dbReference type="ChEBI" id="CHEBI:57273"/>
        <dbReference type="ChEBI" id="CHEBI:57783"/>
        <dbReference type="ChEBI" id="CHEBI:57964"/>
        <dbReference type="ChEBI" id="CHEBI:58349"/>
        <dbReference type="EC" id="1.1.1.271"/>
    </reaction>
</comment>
<comment type="pathway">
    <text evidence="2">Nucleotide-sugar biosynthesis; GDP-L-fucose biosynthesis via de novo pathway; GDP-L-fucose from GDP-alpha-D-mannose: step 2/2.</text>
</comment>
<comment type="subunit">
    <text evidence="2">Homodimer.</text>
</comment>
<comment type="similarity">
    <text evidence="3">Belongs to the NAD(P)-dependent epimerase/dehydratase family. Fucose synthase subfamily.</text>
</comment>
<dbReference type="EC" id="1.1.1.271" evidence="2"/>
<dbReference type="EMBL" id="CR858706">
    <property type="protein sequence ID" value="CAH90915.1"/>
    <property type="molecule type" value="mRNA"/>
</dbReference>
<dbReference type="RefSeq" id="NP_001125522.1">
    <property type="nucleotide sequence ID" value="NM_001132050.1"/>
</dbReference>
<dbReference type="SMR" id="Q5RBE5"/>
<dbReference type="FunCoup" id="Q5RBE5">
    <property type="interactions" value="765"/>
</dbReference>
<dbReference type="STRING" id="9601.ENSPPYP00000021246"/>
<dbReference type="GeneID" id="100172434"/>
<dbReference type="KEGG" id="pon:100172434"/>
<dbReference type="CTD" id="7264"/>
<dbReference type="eggNOG" id="KOG1431">
    <property type="taxonomic scope" value="Eukaryota"/>
</dbReference>
<dbReference type="InParanoid" id="Q5RBE5"/>
<dbReference type="OrthoDB" id="202470at2759"/>
<dbReference type="UniPathway" id="UPA00128">
    <property type="reaction ID" value="UER00191"/>
</dbReference>
<dbReference type="Proteomes" id="UP000001595">
    <property type="component" value="Unplaced"/>
</dbReference>
<dbReference type="GO" id="GO:0050577">
    <property type="term" value="F:GDP-L-fucose synthase activity"/>
    <property type="evidence" value="ECO:0007669"/>
    <property type="project" value="UniProtKB-EC"/>
</dbReference>
<dbReference type="GO" id="GO:0016853">
    <property type="term" value="F:isomerase activity"/>
    <property type="evidence" value="ECO:0007669"/>
    <property type="project" value="UniProtKB-KW"/>
</dbReference>
<dbReference type="GO" id="GO:0042351">
    <property type="term" value="P:'de novo' GDP-L-fucose biosynthetic process"/>
    <property type="evidence" value="ECO:0007669"/>
    <property type="project" value="UniProtKB-UniPathway"/>
</dbReference>
<dbReference type="GO" id="GO:0010595">
    <property type="term" value="P:positive regulation of endothelial cell migration"/>
    <property type="evidence" value="ECO:0000250"/>
    <property type="project" value="UniProtKB"/>
</dbReference>
<dbReference type="GO" id="GO:1904906">
    <property type="term" value="P:positive regulation of endothelial cell-matrix adhesion via fibronectin"/>
    <property type="evidence" value="ECO:0000250"/>
    <property type="project" value="UniProtKB"/>
</dbReference>
<dbReference type="CDD" id="cd05239">
    <property type="entry name" value="GDP_FS_SDR_e"/>
    <property type="match status" value="1"/>
</dbReference>
<dbReference type="FunFam" id="3.90.25.10:FF:000043">
    <property type="entry name" value="Tissue-specific transplantation antigen P35B"/>
    <property type="match status" value="1"/>
</dbReference>
<dbReference type="Gene3D" id="3.40.50.720">
    <property type="entry name" value="NAD(P)-binding Rossmann-like Domain"/>
    <property type="match status" value="1"/>
</dbReference>
<dbReference type="Gene3D" id="3.90.25.10">
    <property type="entry name" value="UDP-galactose 4-epimerase, domain 1"/>
    <property type="match status" value="1"/>
</dbReference>
<dbReference type="HAMAP" id="MF_00956">
    <property type="entry name" value="GDP_fucose_synth"/>
    <property type="match status" value="1"/>
</dbReference>
<dbReference type="InterPro" id="IPR001509">
    <property type="entry name" value="Epimerase_deHydtase"/>
</dbReference>
<dbReference type="InterPro" id="IPR028614">
    <property type="entry name" value="GDP_fucose/colitose_synth"/>
</dbReference>
<dbReference type="InterPro" id="IPR036291">
    <property type="entry name" value="NAD(P)-bd_dom_sf"/>
</dbReference>
<dbReference type="PANTHER" id="PTHR43238">
    <property type="entry name" value="GDP-L-FUCOSE SYNTHASE"/>
    <property type="match status" value="1"/>
</dbReference>
<dbReference type="PANTHER" id="PTHR43238:SF1">
    <property type="entry name" value="GDP-L-FUCOSE SYNTHASE"/>
    <property type="match status" value="1"/>
</dbReference>
<dbReference type="Pfam" id="PF01370">
    <property type="entry name" value="Epimerase"/>
    <property type="match status" value="1"/>
</dbReference>
<dbReference type="SUPFAM" id="SSF51735">
    <property type="entry name" value="NAD(P)-binding Rossmann-fold domains"/>
    <property type="match status" value="1"/>
</dbReference>
<accession>Q5RBE5</accession>
<proteinExistence type="evidence at transcript level"/>
<reference key="1">
    <citation type="submission" date="2004-11" db="EMBL/GenBank/DDBJ databases">
        <authorList>
            <consortium name="The German cDNA consortium"/>
        </authorList>
    </citation>
    <scope>NUCLEOTIDE SEQUENCE [LARGE SCALE MRNA]</scope>
    <source>
        <tissue>Kidney</tissue>
    </source>
</reference>